<dbReference type="EMBL" id="AL590842">
    <property type="protein sequence ID" value="CAL18793.1"/>
    <property type="molecule type" value="Genomic_DNA"/>
</dbReference>
<dbReference type="EMBL" id="AE009952">
    <property type="protein sequence ID" value="AAM83886.1"/>
    <property type="molecule type" value="Genomic_DNA"/>
</dbReference>
<dbReference type="EMBL" id="AE017042">
    <property type="protein sequence ID" value="AAS60386.1"/>
    <property type="molecule type" value="Genomic_DNA"/>
</dbReference>
<dbReference type="PIR" id="AH0013">
    <property type="entry name" value="AH0013"/>
</dbReference>
<dbReference type="RefSeq" id="WP_002208943.1">
    <property type="nucleotide sequence ID" value="NZ_WUCM01000087.1"/>
</dbReference>
<dbReference type="RefSeq" id="YP_002345195.1">
    <property type="nucleotide sequence ID" value="NC_003143.1"/>
</dbReference>
<dbReference type="SMR" id="Q8ZJJ5"/>
<dbReference type="IntAct" id="Q8ZJJ5">
    <property type="interactions" value="8"/>
</dbReference>
<dbReference type="STRING" id="214092.YPO0105"/>
<dbReference type="PaxDb" id="214092-YPO0105"/>
<dbReference type="DNASU" id="1145241"/>
<dbReference type="EnsemblBacteria" id="AAS60386">
    <property type="protein sequence ID" value="AAS60386"/>
    <property type="gene ID" value="YP_0107"/>
</dbReference>
<dbReference type="GeneID" id="96663576"/>
<dbReference type="KEGG" id="ype:YPO0105"/>
<dbReference type="KEGG" id="ypk:y0294"/>
<dbReference type="KEGG" id="ypm:YP_0107"/>
<dbReference type="PATRIC" id="fig|214092.21.peg.331"/>
<dbReference type="eggNOG" id="COG1220">
    <property type="taxonomic scope" value="Bacteria"/>
</dbReference>
<dbReference type="HOGENOM" id="CLU_033123_0_0_6"/>
<dbReference type="OMA" id="YGMIKTD"/>
<dbReference type="OrthoDB" id="9804062at2"/>
<dbReference type="Proteomes" id="UP000000815">
    <property type="component" value="Chromosome"/>
</dbReference>
<dbReference type="Proteomes" id="UP000001019">
    <property type="component" value="Chromosome"/>
</dbReference>
<dbReference type="Proteomes" id="UP000002490">
    <property type="component" value="Chromosome"/>
</dbReference>
<dbReference type="GO" id="GO:0009376">
    <property type="term" value="C:HslUV protease complex"/>
    <property type="evidence" value="ECO:0000318"/>
    <property type="project" value="GO_Central"/>
</dbReference>
<dbReference type="GO" id="GO:0005524">
    <property type="term" value="F:ATP binding"/>
    <property type="evidence" value="ECO:0000318"/>
    <property type="project" value="GO_Central"/>
</dbReference>
<dbReference type="GO" id="GO:0016887">
    <property type="term" value="F:ATP hydrolysis activity"/>
    <property type="evidence" value="ECO:0000318"/>
    <property type="project" value="GO_Central"/>
</dbReference>
<dbReference type="GO" id="GO:0008233">
    <property type="term" value="F:peptidase activity"/>
    <property type="evidence" value="ECO:0007669"/>
    <property type="project" value="InterPro"/>
</dbReference>
<dbReference type="GO" id="GO:0036402">
    <property type="term" value="F:proteasome-activating activity"/>
    <property type="evidence" value="ECO:0007669"/>
    <property type="project" value="UniProtKB-UniRule"/>
</dbReference>
<dbReference type="GO" id="GO:0043335">
    <property type="term" value="P:protein unfolding"/>
    <property type="evidence" value="ECO:0007669"/>
    <property type="project" value="UniProtKB-UniRule"/>
</dbReference>
<dbReference type="GO" id="GO:0051603">
    <property type="term" value="P:proteolysis involved in protein catabolic process"/>
    <property type="evidence" value="ECO:0000318"/>
    <property type="project" value="GO_Central"/>
</dbReference>
<dbReference type="CDD" id="cd19498">
    <property type="entry name" value="RecA-like_HslU"/>
    <property type="match status" value="1"/>
</dbReference>
<dbReference type="FunFam" id="1.10.8.10:FF:000028">
    <property type="entry name" value="ATP-dependent protease ATPase subunit HslU"/>
    <property type="match status" value="2"/>
</dbReference>
<dbReference type="FunFam" id="1.10.8.60:FF:000027">
    <property type="entry name" value="ATP-dependent protease ATPase subunit HslU"/>
    <property type="match status" value="1"/>
</dbReference>
<dbReference type="FunFam" id="3.40.50.300:FF:000213">
    <property type="entry name" value="ATP-dependent protease ATPase subunit HslU"/>
    <property type="match status" value="1"/>
</dbReference>
<dbReference type="FunFam" id="3.40.50.300:FF:000220">
    <property type="entry name" value="ATP-dependent protease ATPase subunit HslU"/>
    <property type="match status" value="1"/>
</dbReference>
<dbReference type="Gene3D" id="1.10.8.60">
    <property type="match status" value="1"/>
</dbReference>
<dbReference type="Gene3D" id="1.10.8.10">
    <property type="entry name" value="DNA helicase RuvA subunit, C-terminal domain"/>
    <property type="match status" value="1"/>
</dbReference>
<dbReference type="Gene3D" id="3.40.50.300">
    <property type="entry name" value="P-loop containing nucleotide triphosphate hydrolases"/>
    <property type="match status" value="2"/>
</dbReference>
<dbReference type="HAMAP" id="MF_00249">
    <property type="entry name" value="HslU"/>
    <property type="match status" value="1"/>
</dbReference>
<dbReference type="InterPro" id="IPR003593">
    <property type="entry name" value="AAA+_ATPase"/>
</dbReference>
<dbReference type="InterPro" id="IPR050052">
    <property type="entry name" value="ATP-dep_Clp_protease_ClpX"/>
</dbReference>
<dbReference type="InterPro" id="IPR003959">
    <property type="entry name" value="ATPase_AAA_core"/>
</dbReference>
<dbReference type="InterPro" id="IPR019489">
    <property type="entry name" value="Clp_ATPase_C"/>
</dbReference>
<dbReference type="InterPro" id="IPR004491">
    <property type="entry name" value="HslU"/>
</dbReference>
<dbReference type="InterPro" id="IPR027417">
    <property type="entry name" value="P-loop_NTPase"/>
</dbReference>
<dbReference type="NCBIfam" id="TIGR00390">
    <property type="entry name" value="hslU"/>
    <property type="match status" value="1"/>
</dbReference>
<dbReference type="NCBIfam" id="NF003544">
    <property type="entry name" value="PRK05201.1"/>
    <property type="match status" value="1"/>
</dbReference>
<dbReference type="PANTHER" id="PTHR48102">
    <property type="entry name" value="ATP-DEPENDENT CLP PROTEASE ATP-BINDING SUBUNIT CLPX-LIKE, MITOCHONDRIAL-RELATED"/>
    <property type="match status" value="1"/>
</dbReference>
<dbReference type="PANTHER" id="PTHR48102:SF3">
    <property type="entry name" value="ATP-DEPENDENT PROTEASE ATPASE SUBUNIT HSLU"/>
    <property type="match status" value="1"/>
</dbReference>
<dbReference type="Pfam" id="PF00004">
    <property type="entry name" value="AAA"/>
    <property type="match status" value="1"/>
</dbReference>
<dbReference type="Pfam" id="PF07724">
    <property type="entry name" value="AAA_2"/>
    <property type="match status" value="1"/>
</dbReference>
<dbReference type="SMART" id="SM00382">
    <property type="entry name" value="AAA"/>
    <property type="match status" value="1"/>
</dbReference>
<dbReference type="SMART" id="SM01086">
    <property type="entry name" value="ClpB_D2-small"/>
    <property type="match status" value="1"/>
</dbReference>
<dbReference type="SUPFAM" id="SSF52540">
    <property type="entry name" value="P-loop containing nucleoside triphosphate hydrolases"/>
    <property type="match status" value="1"/>
</dbReference>
<reference key="1">
    <citation type="journal article" date="2001" name="Nature">
        <title>Genome sequence of Yersinia pestis, the causative agent of plague.</title>
        <authorList>
            <person name="Parkhill J."/>
            <person name="Wren B.W."/>
            <person name="Thomson N.R."/>
            <person name="Titball R.W."/>
            <person name="Holden M.T.G."/>
            <person name="Prentice M.B."/>
            <person name="Sebaihia M."/>
            <person name="James K.D."/>
            <person name="Churcher C.M."/>
            <person name="Mungall K.L."/>
            <person name="Baker S."/>
            <person name="Basham D."/>
            <person name="Bentley S.D."/>
            <person name="Brooks K."/>
            <person name="Cerdeno-Tarraga A.-M."/>
            <person name="Chillingworth T."/>
            <person name="Cronin A."/>
            <person name="Davies R.M."/>
            <person name="Davis P."/>
            <person name="Dougan G."/>
            <person name="Feltwell T."/>
            <person name="Hamlin N."/>
            <person name="Holroyd S."/>
            <person name="Jagels K."/>
            <person name="Karlyshev A.V."/>
            <person name="Leather S."/>
            <person name="Moule S."/>
            <person name="Oyston P.C.F."/>
            <person name="Quail M.A."/>
            <person name="Rutherford K.M."/>
            <person name="Simmonds M."/>
            <person name="Skelton J."/>
            <person name="Stevens K."/>
            <person name="Whitehead S."/>
            <person name="Barrell B.G."/>
        </authorList>
    </citation>
    <scope>NUCLEOTIDE SEQUENCE [LARGE SCALE GENOMIC DNA]</scope>
    <source>
        <strain>CO-92 / Biovar Orientalis</strain>
    </source>
</reference>
<reference key="2">
    <citation type="journal article" date="2002" name="J. Bacteriol.">
        <title>Genome sequence of Yersinia pestis KIM.</title>
        <authorList>
            <person name="Deng W."/>
            <person name="Burland V."/>
            <person name="Plunkett G. III"/>
            <person name="Boutin A."/>
            <person name="Mayhew G.F."/>
            <person name="Liss P."/>
            <person name="Perna N.T."/>
            <person name="Rose D.J."/>
            <person name="Mau B."/>
            <person name="Zhou S."/>
            <person name="Schwartz D.C."/>
            <person name="Fetherston J.D."/>
            <person name="Lindler L.E."/>
            <person name="Brubaker R.R."/>
            <person name="Plano G.V."/>
            <person name="Straley S.C."/>
            <person name="McDonough K.A."/>
            <person name="Nilles M.L."/>
            <person name="Matson J.S."/>
            <person name="Blattner F.R."/>
            <person name="Perry R.D."/>
        </authorList>
    </citation>
    <scope>NUCLEOTIDE SEQUENCE [LARGE SCALE GENOMIC DNA]</scope>
    <source>
        <strain>KIM10+ / Biovar Mediaevalis</strain>
    </source>
</reference>
<reference key="3">
    <citation type="journal article" date="2004" name="DNA Res.">
        <title>Complete genome sequence of Yersinia pestis strain 91001, an isolate avirulent to humans.</title>
        <authorList>
            <person name="Song Y."/>
            <person name="Tong Z."/>
            <person name="Wang J."/>
            <person name="Wang L."/>
            <person name="Guo Z."/>
            <person name="Han Y."/>
            <person name="Zhang J."/>
            <person name="Pei D."/>
            <person name="Zhou D."/>
            <person name="Qin H."/>
            <person name="Pang X."/>
            <person name="Han Y."/>
            <person name="Zhai J."/>
            <person name="Li M."/>
            <person name="Cui B."/>
            <person name="Qi Z."/>
            <person name="Jin L."/>
            <person name="Dai R."/>
            <person name="Chen F."/>
            <person name="Li S."/>
            <person name="Ye C."/>
            <person name="Du Z."/>
            <person name="Lin W."/>
            <person name="Wang J."/>
            <person name="Yu J."/>
            <person name="Yang H."/>
            <person name="Wang J."/>
            <person name="Huang P."/>
            <person name="Yang R."/>
        </authorList>
    </citation>
    <scope>NUCLEOTIDE SEQUENCE [LARGE SCALE GENOMIC DNA]</scope>
    <source>
        <strain>91001 / Biovar Mediaevalis</strain>
    </source>
</reference>
<gene>
    <name evidence="1" type="primary">hslU</name>
    <name type="ordered locus">YPO0105</name>
    <name type="ordered locus">y0294</name>
    <name type="ordered locus">YP_0107</name>
</gene>
<evidence type="ECO:0000255" key="1">
    <source>
        <dbReference type="HAMAP-Rule" id="MF_00249"/>
    </source>
</evidence>
<name>HSLU_YERPE</name>
<keyword id="KW-0067">ATP-binding</keyword>
<keyword id="KW-0143">Chaperone</keyword>
<keyword id="KW-0963">Cytoplasm</keyword>
<keyword id="KW-0547">Nucleotide-binding</keyword>
<keyword id="KW-1185">Reference proteome</keyword>
<proteinExistence type="inferred from homology"/>
<sequence>MSEMTPREIVSELDSHIIGQDKAKRAVAIALRNRWRRMQLNEELRHEVTPKNILMIGPTGVGKTEIARRLAKLANAPFIKVEATKFTEVGYVGKEVDSIIRDLTDAAVKMVRHQSIEKMRYRAEELAEERILDVLIPPAKNNWGVPDESQEPSATRQTFRKKLREGQLDDKEIEIDLAAAPMGVEIMAPPGMEEMTNQLQSMFQNIAGQKQKPRKIKIKEALKLLIEEEAAKLVNPEELKQQAIDAVEQHGIVFIDEIDKICKRGQTSGPDVSREGVQRDLLPLVEGCTVSTKHGMVKTDHILFIASGAFQVSSPSDLIPELQGRLPIRVELQALTTDDFERILTEPSASLTEQYKALMATEGVTIEFTREGIRKIAEAAWQVNERTENIGARRLHTVLERLMEDISYDASESSGQSITIDAEYVGKHLDELVADEDLSRFIL</sequence>
<protein>
    <recommendedName>
        <fullName evidence="1">ATP-dependent protease ATPase subunit HslU</fullName>
    </recommendedName>
    <alternativeName>
        <fullName evidence="1">Unfoldase HslU</fullName>
    </alternativeName>
</protein>
<organism>
    <name type="scientific">Yersinia pestis</name>
    <dbReference type="NCBI Taxonomy" id="632"/>
    <lineage>
        <taxon>Bacteria</taxon>
        <taxon>Pseudomonadati</taxon>
        <taxon>Pseudomonadota</taxon>
        <taxon>Gammaproteobacteria</taxon>
        <taxon>Enterobacterales</taxon>
        <taxon>Yersiniaceae</taxon>
        <taxon>Yersinia</taxon>
    </lineage>
</organism>
<accession>Q8ZJJ5</accession>
<accession>Q0WKJ3</accession>
<feature type="chain" id="PRO_0000160566" description="ATP-dependent protease ATPase subunit HslU">
    <location>
        <begin position="1"/>
        <end position="443"/>
    </location>
</feature>
<feature type="binding site" evidence="1">
    <location>
        <position position="18"/>
    </location>
    <ligand>
        <name>ATP</name>
        <dbReference type="ChEBI" id="CHEBI:30616"/>
    </ligand>
</feature>
<feature type="binding site" evidence="1">
    <location>
        <begin position="60"/>
        <end position="65"/>
    </location>
    <ligand>
        <name>ATP</name>
        <dbReference type="ChEBI" id="CHEBI:30616"/>
    </ligand>
</feature>
<feature type="binding site" evidence="1">
    <location>
        <position position="256"/>
    </location>
    <ligand>
        <name>ATP</name>
        <dbReference type="ChEBI" id="CHEBI:30616"/>
    </ligand>
</feature>
<feature type="binding site" evidence="1">
    <location>
        <position position="321"/>
    </location>
    <ligand>
        <name>ATP</name>
        <dbReference type="ChEBI" id="CHEBI:30616"/>
    </ligand>
</feature>
<feature type="binding site" evidence="1">
    <location>
        <position position="393"/>
    </location>
    <ligand>
        <name>ATP</name>
        <dbReference type="ChEBI" id="CHEBI:30616"/>
    </ligand>
</feature>
<comment type="function">
    <text evidence="1">ATPase subunit of a proteasome-like degradation complex; this subunit has chaperone activity. The binding of ATP and its subsequent hydrolysis by HslU are essential for unfolding of protein substrates subsequently hydrolyzed by HslV. HslU recognizes the N-terminal part of its protein substrates and unfolds these before they are guided to HslV for hydrolysis.</text>
</comment>
<comment type="subunit">
    <text evidence="1">A double ring-shaped homohexamer of HslV is capped on each side by a ring-shaped HslU homohexamer. The assembly of the HslU/HslV complex is dependent on binding of ATP.</text>
</comment>
<comment type="subcellular location">
    <subcellularLocation>
        <location evidence="1">Cytoplasm</location>
    </subcellularLocation>
</comment>
<comment type="similarity">
    <text evidence="1">Belongs to the ClpX chaperone family. HslU subfamily.</text>
</comment>